<proteinExistence type="evidence at protein level"/>
<evidence type="ECO:0000250" key="1"/>
<evidence type="ECO:0000255" key="2"/>
<evidence type="ECO:0000305" key="3"/>
<keyword id="KW-0903">Direct protein sequencing</keyword>
<keyword id="KW-0326">Glycosidase</keyword>
<keyword id="KW-0378">Hydrolase</keyword>
<keyword id="KW-0677">Repeat</keyword>
<keyword id="KW-0964">Secreted</keyword>
<organism>
    <name type="scientific">Clostridium perfringens</name>
    <dbReference type="NCBI Taxonomy" id="1502"/>
    <lineage>
        <taxon>Bacteria</taxon>
        <taxon>Bacillati</taxon>
        <taxon>Bacillota</taxon>
        <taxon>Clostridia</taxon>
        <taxon>Eubacteriales</taxon>
        <taxon>Clostridiaceae</taxon>
        <taxon>Clostridium</taxon>
    </lineage>
</organism>
<dbReference type="EC" id="3.2.1.18"/>
<dbReference type="EMBL" id="Y00963">
    <property type="protein sequence ID" value="CAA68780.1"/>
    <property type="molecule type" value="Genomic_DNA"/>
</dbReference>
<dbReference type="PIR" id="S01339">
    <property type="entry name" value="S01339"/>
</dbReference>
<dbReference type="RefSeq" id="WP_118429947.1">
    <property type="nucleotide sequence ID" value="NZ_CATNYR010000006.1"/>
</dbReference>
<dbReference type="SMR" id="P10481"/>
<dbReference type="BindingDB" id="P10481"/>
<dbReference type="ChEMBL" id="CHEMBL5189"/>
<dbReference type="DrugCentral" id="P10481"/>
<dbReference type="CAZy" id="GH33">
    <property type="family name" value="Glycoside Hydrolase Family 33"/>
</dbReference>
<dbReference type="BioCyc" id="MetaCyc:MONOMER-18998"/>
<dbReference type="BRENDA" id="3.2.1.18">
    <property type="organism ID" value="1503"/>
</dbReference>
<dbReference type="SABIO-RK" id="P10481"/>
<dbReference type="PHI-base" id="PHI:11345"/>
<dbReference type="GO" id="GO:0005737">
    <property type="term" value="C:cytoplasm"/>
    <property type="evidence" value="ECO:0007669"/>
    <property type="project" value="TreeGrafter"/>
</dbReference>
<dbReference type="GO" id="GO:0005576">
    <property type="term" value="C:extracellular region"/>
    <property type="evidence" value="ECO:0007669"/>
    <property type="project" value="UniProtKB-SubCell"/>
</dbReference>
<dbReference type="GO" id="GO:0043231">
    <property type="term" value="C:intracellular membrane-bounded organelle"/>
    <property type="evidence" value="ECO:0007669"/>
    <property type="project" value="TreeGrafter"/>
</dbReference>
<dbReference type="GO" id="GO:0016020">
    <property type="term" value="C:membrane"/>
    <property type="evidence" value="ECO:0007669"/>
    <property type="project" value="TreeGrafter"/>
</dbReference>
<dbReference type="GO" id="GO:0004308">
    <property type="term" value="F:exo-alpha-sialidase activity"/>
    <property type="evidence" value="ECO:0007669"/>
    <property type="project" value="UniProtKB-EC"/>
</dbReference>
<dbReference type="GO" id="GO:0006689">
    <property type="term" value="P:ganglioside catabolic process"/>
    <property type="evidence" value="ECO:0007669"/>
    <property type="project" value="TreeGrafter"/>
</dbReference>
<dbReference type="GO" id="GO:0009313">
    <property type="term" value="P:oligosaccharide catabolic process"/>
    <property type="evidence" value="ECO:0007669"/>
    <property type="project" value="TreeGrafter"/>
</dbReference>
<dbReference type="CDD" id="cd15482">
    <property type="entry name" value="Sialidase_non-viral"/>
    <property type="match status" value="1"/>
</dbReference>
<dbReference type="Gene3D" id="2.120.10.10">
    <property type="match status" value="1"/>
</dbReference>
<dbReference type="InterPro" id="IPR011040">
    <property type="entry name" value="Sialidase"/>
</dbReference>
<dbReference type="InterPro" id="IPR026856">
    <property type="entry name" value="Sialidase_fam"/>
</dbReference>
<dbReference type="InterPro" id="IPR036278">
    <property type="entry name" value="Sialidase_sf"/>
</dbReference>
<dbReference type="InterPro" id="IPR008377">
    <property type="entry name" value="Sialidase_trypan"/>
</dbReference>
<dbReference type="PANTHER" id="PTHR10628:SF30">
    <property type="entry name" value="EXO-ALPHA-SIALIDASE"/>
    <property type="match status" value="1"/>
</dbReference>
<dbReference type="PANTHER" id="PTHR10628">
    <property type="entry name" value="SIALIDASE"/>
    <property type="match status" value="1"/>
</dbReference>
<dbReference type="Pfam" id="PF13859">
    <property type="entry name" value="BNR_3"/>
    <property type="match status" value="1"/>
</dbReference>
<dbReference type="PRINTS" id="PR01803">
    <property type="entry name" value="TCSIALIDASE"/>
</dbReference>
<dbReference type="SUPFAM" id="SSF50939">
    <property type="entry name" value="Sialidases"/>
    <property type="match status" value="1"/>
</dbReference>
<reference key="1">
    <citation type="journal article" date="1988" name="FEBS Lett.">
        <title>Cloning and sequencing of a Clostridium perfringens sialidase gene.</title>
        <authorList>
            <person name="Roggentin P."/>
            <person name="Rothe B."/>
            <person name="Lottspeich F."/>
            <person name="Schauer R."/>
        </authorList>
    </citation>
    <scope>NUCLEOTIDE SEQUENCE [GENOMIC DNA]</scope>
    <scope>PROTEIN SEQUENCE OF 8-27</scope>
    <source>
        <strain>A99</strain>
    </source>
</reference>
<comment type="function">
    <text>Sialidases have been suggested to be pathogenic factors in microbial infections.</text>
</comment>
<comment type="catalytic activity">
    <reaction>
        <text>Hydrolysis of alpha-(2-&gt;3)-, alpha-(2-&gt;6)-, alpha-(2-&gt;8)- glycosidic linkages of terminal sialic acid residues in oligosaccharides, glycoproteins, glycolipids, colominic acid and synthetic substrates.</text>
        <dbReference type="EC" id="3.2.1.18"/>
    </reaction>
</comment>
<comment type="subcellular location">
    <subcellularLocation>
        <location>Secreted</location>
    </subcellularLocation>
</comment>
<comment type="similarity">
    <text evidence="3">Belongs to the glycosyl hydrolase 33 family.</text>
</comment>
<accession>P10481</accession>
<sequence length="382" mass="42813">MCNKNNTFEKNLDISHKPEPLILFNKDNNIWNSKYFRIPNIQLLNDGTILTFSDIRYNGPDDHAYIDIASARSTDFGKTWSYNIAMKNNRIDSTYSRVMDSTTVITNTGRIILIAGSWNTNGNWAMTTSTRRSDWSVQMIYSDDNGLTWSNKIDLTKDSSKVKNQPSNTIGWLGGVGSGIVMDDGTIVMPAQISLRENNENNYYSLIIYSKDNGETWTMGNKVPNSNTSENMVIELDGALIMSTRYDYSGYRAAYISHDLGTTWEIYEPLNGKILTGKGSGCQGSFIKATTSNGHRIGLISAPKNTKGEYIRDNIAVYMIDFDDLSKGVQEICIPYPEDGNKLGGGYSCLSFKNNHLGIVYEANGNIEYQDLTPYYSLINKQ</sequence>
<name>NANH_CLOPF</name>
<protein>
    <recommendedName>
        <fullName>Sialidase</fullName>
        <ecNumber>3.2.1.18</ecNumber>
    </recommendedName>
    <alternativeName>
        <fullName>Neuraminidase</fullName>
    </alternativeName>
</protein>
<feature type="chain" id="PRO_0000208908" description="Sialidase">
    <location>
        <begin position="1"/>
        <end position="382"/>
    </location>
</feature>
<feature type="repeat" description="BNR 1">
    <location>
        <begin position="71"/>
        <end position="82"/>
    </location>
</feature>
<feature type="repeat" description="BNR 2">
    <location>
        <begin position="140"/>
        <end position="151"/>
    </location>
</feature>
<feature type="repeat" description="BNR 3">
    <location>
        <begin position="208"/>
        <end position="219"/>
    </location>
</feature>
<feature type="repeat" description="BNR 4">
    <location>
        <begin position="255"/>
        <end position="266"/>
    </location>
</feature>
<feature type="active site" description="Proton acceptor" evidence="1">
    <location>
        <position position="62"/>
    </location>
</feature>
<feature type="active site" description="Nucleophile" evidence="1">
    <location>
        <position position="347"/>
    </location>
</feature>
<feature type="binding site" evidence="1">
    <location>
        <position position="37"/>
    </location>
    <ligand>
        <name>substrate</name>
    </ligand>
</feature>
<feature type="binding site" evidence="2">
    <location>
        <position position="245"/>
    </location>
    <ligand>
        <name>substrate</name>
    </ligand>
</feature>
<gene>
    <name type="primary">nanH</name>
</gene>